<feature type="chain" id="PRO_0000167502" description="Ribosome-recycling factor">
    <location>
        <begin position="1"/>
        <end position="185"/>
    </location>
</feature>
<organism>
    <name type="scientific">Neisseria meningitidis serogroup A / serotype 4A (strain DSM 15465 / Z2491)</name>
    <dbReference type="NCBI Taxonomy" id="122587"/>
    <lineage>
        <taxon>Bacteria</taxon>
        <taxon>Pseudomonadati</taxon>
        <taxon>Pseudomonadota</taxon>
        <taxon>Betaproteobacteria</taxon>
        <taxon>Neisseriales</taxon>
        <taxon>Neisseriaceae</taxon>
        <taxon>Neisseria</taxon>
    </lineage>
</organism>
<sequence length="185" mass="20731">MINDIQKTAEGKMQRSVEVLKENLAKVRTGRAHTGLLDQVEVEYWGSMVPVSQVANVTLLDARTIGVKPFEGNMAAKVEKAIRDSNLGLNPAAVGDLIRVPMPMLTEERRKDLIKVVRGEAEEGRVSIRNVRRDANDHIKKLLKDKEISEDEARRGEEAVQKLTDKYITEADKLLTAKEEDLMAI</sequence>
<protein>
    <recommendedName>
        <fullName evidence="1">Ribosome-recycling factor</fullName>
        <shortName evidence="1">RRF</shortName>
    </recommendedName>
    <alternativeName>
        <fullName evidence="1">Ribosome-releasing factor</fullName>
    </alternativeName>
</protein>
<proteinExistence type="inferred from homology"/>
<accession>P66736</accession>
<accession>A1INU2</accession>
<accession>Q9JR52</accession>
<name>RRF_NEIMA</name>
<reference key="1">
    <citation type="journal article" date="2000" name="Nature">
        <title>Complete DNA sequence of a serogroup A strain of Neisseria meningitidis Z2491.</title>
        <authorList>
            <person name="Parkhill J."/>
            <person name="Achtman M."/>
            <person name="James K.D."/>
            <person name="Bentley S.D."/>
            <person name="Churcher C.M."/>
            <person name="Klee S.R."/>
            <person name="Morelli G."/>
            <person name="Basham D."/>
            <person name="Brown D."/>
            <person name="Chillingworth T."/>
            <person name="Davies R.M."/>
            <person name="Davis P."/>
            <person name="Devlin K."/>
            <person name="Feltwell T."/>
            <person name="Hamlin N."/>
            <person name="Holroyd S."/>
            <person name="Jagels K."/>
            <person name="Leather S."/>
            <person name="Moule S."/>
            <person name="Mungall K.L."/>
            <person name="Quail M.A."/>
            <person name="Rajandream M.A."/>
            <person name="Rutherford K.M."/>
            <person name="Simmonds M."/>
            <person name="Skelton J."/>
            <person name="Whitehead S."/>
            <person name="Spratt B.G."/>
            <person name="Barrell B.G."/>
        </authorList>
    </citation>
    <scope>NUCLEOTIDE SEQUENCE [LARGE SCALE GENOMIC DNA]</scope>
    <source>
        <strain>DSM 15465 / Z2491</strain>
    </source>
</reference>
<evidence type="ECO:0000255" key="1">
    <source>
        <dbReference type="HAMAP-Rule" id="MF_00040"/>
    </source>
</evidence>
<dbReference type="EMBL" id="AL157959">
    <property type="protein sequence ID" value="CAM07399.1"/>
    <property type="molecule type" value="Genomic_DNA"/>
</dbReference>
<dbReference type="RefSeq" id="WP_002216270.1">
    <property type="nucleotide sequence ID" value="NC_003116.1"/>
</dbReference>
<dbReference type="SMR" id="P66736"/>
<dbReference type="EnsemblBacteria" id="CAM07399">
    <property type="protein sequence ID" value="CAM07399"/>
    <property type="gene ID" value="NMA0080"/>
</dbReference>
<dbReference type="GeneID" id="93387265"/>
<dbReference type="KEGG" id="nma:NMA0080"/>
<dbReference type="HOGENOM" id="CLU_073981_2_0_4"/>
<dbReference type="Proteomes" id="UP000000626">
    <property type="component" value="Chromosome"/>
</dbReference>
<dbReference type="GO" id="GO:0005829">
    <property type="term" value="C:cytosol"/>
    <property type="evidence" value="ECO:0007669"/>
    <property type="project" value="GOC"/>
</dbReference>
<dbReference type="GO" id="GO:0043023">
    <property type="term" value="F:ribosomal large subunit binding"/>
    <property type="evidence" value="ECO:0007669"/>
    <property type="project" value="TreeGrafter"/>
</dbReference>
<dbReference type="GO" id="GO:0002184">
    <property type="term" value="P:cytoplasmic translational termination"/>
    <property type="evidence" value="ECO:0007669"/>
    <property type="project" value="TreeGrafter"/>
</dbReference>
<dbReference type="CDD" id="cd00520">
    <property type="entry name" value="RRF"/>
    <property type="match status" value="1"/>
</dbReference>
<dbReference type="FunFam" id="1.10.132.20:FF:000001">
    <property type="entry name" value="Ribosome-recycling factor"/>
    <property type="match status" value="1"/>
</dbReference>
<dbReference type="FunFam" id="3.30.1360.40:FF:000001">
    <property type="entry name" value="Ribosome-recycling factor"/>
    <property type="match status" value="1"/>
</dbReference>
<dbReference type="Gene3D" id="3.30.1360.40">
    <property type="match status" value="1"/>
</dbReference>
<dbReference type="Gene3D" id="1.10.132.20">
    <property type="entry name" value="Ribosome-recycling factor"/>
    <property type="match status" value="1"/>
</dbReference>
<dbReference type="HAMAP" id="MF_00040">
    <property type="entry name" value="RRF"/>
    <property type="match status" value="1"/>
</dbReference>
<dbReference type="InterPro" id="IPR002661">
    <property type="entry name" value="Ribosome_recyc_fac"/>
</dbReference>
<dbReference type="InterPro" id="IPR023584">
    <property type="entry name" value="Ribosome_recyc_fac_dom"/>
</dbReference>
<dbReference type="InterPro" id="IPR036191">
    <property type="entry name" value="RRF_sf"/>
</dbReference>
<dbReference type="NCBIfam" id="TIGR00496">
    <property type="entry name" value="frr"/>
    <property type="match status" value="1"/>
</dbReference>
<dbReference type="PANTHER" id="PTHR20982:SF3">
    <property type="entry name" value="MITOCHONDRIAL RIBOSOME RECYCLING FACTOR PSEUDO 1"/>
    <property type="match status" value="1"/>
</dbReference>
<dbReference type="PANTHER" id="PTHR20982">
    <property type="entry name" value="RIBOSOME RECYCLING FACTOR"/>
    <property type="match status" value="1"/>
</dbReference>
<dbReference type="Pfam" id="PF01765">
    <property type="entry name" value="RRF"/>
    <property type="match status" value="1"/>
</dbReference>
<dbReference type="SUPFAM" id="SSF55194">
    <property type="entry name" value="Ribosome recycling factor, RRF"/>
    <property type="match status" value="1"/>
</dbReference>
<keyword id="KW-0963">Cytoplasm</keyword>
<keyword id="KW-0648">Protein biosynthesis</keyword>
<comment type="function">
    <text evidence="1">Responsible for the release of ribosomes from messenger RNA at the termination of protein biosynthesis. May increase the efficiency of translation by recycling ribosomes from one round of translation to another.</text>
</comment>
<comment type="subcellular location">
    <subcellularLocation>
        <location evidence="1">Cytoplasm</location>
    </subcellularLocation>
</comment>
<comment type="similarity">
    <text evidence="1">Belongs to the RRF family.</text>
</comment>
<gene>
    <name evidence="1" type="primary">frr</name>
    <name type="ordered locus">NMA0080</name>
</gene>